<dbReference type="EC" id="6.3.4.4" evidence="2"/>
<dbReference type="EMBL" id="CM001234">
    <property type="protein sequence ID" value="EHA49567.1"/>
    <property type="molecule type" value="Genomic_DNA"/>
</dbReference>
<dbReference type="RefSeq" id="XP_003715886.1">
    <property type="nucleotide sequence ID" value="XM_003715838.1"/>
</dbReference>
<dbReference type="SMR" id="A4QXV8"/>
<dbReference type="FunCoup" id="A4QXV8">
    <property type="interactions" value="803"/>
</dbReference>
<dbReference type="STRING" id="242507.A4QXV8"/>
<dbReference type="EnsemblFungi" id="MGG_17000T0">
    <property type="protein sequence ID" value="MGG_17000T0"/>
    <property type="gene ID" value="MGG_17000"/>
</dbReference>
<dbReference type="GeneID" id="12986831"/>
<dbReference type="KEGG" id="mgr:MGG_17000"/>
<dbReference type="VEuPathDB" id="FungiDB:MGG_17000"/>
<dbReference type="eggNOG" id="KOG1355">
    <property type="taxonomic scope" value="Eukaryota"/>
</dbReference>
<dbReference type="HOGENOM" id="CLU_029848_3_2_1"/>
<dbReference type="InParanoid" id="A4QXV8"/>
<dbReference type="OMA" id="FHHAKPI"/>
<dbReference type="OrthoDB" id="10265645at2759"/>
<dbReference type="UniPathway" id="UPA00075">
    <property type="reaction ID" value="UER00335"/>
</dbReference>
<dbReference type="PHI-base" id="PHI:123289"/>
<dbReference type="PHI-base" id="PHI:123551"/>
<dbReference type="Proteomes" id="UP000009058">
    <property type="component" value="Chromosome 4"/>
</dbReference>
<dbReference type="GO" id="GO:0005737">
    <property type="term" value="C:cytoplasm"/>
    <property type="evidence" value="ECO:0007669"/>
    <property type="project" value="UniProtKB-SubCell"/>
</dbReference>
<dbReference type="GO" id="GO:0004019">
    <property type="term" value="F:adenylosuccinate synthase activity"/>
    <property type="evidence" value="ECO:0007669"/>
    <property type="project" value="UniProtKB-UniRule"/>
</dbReference>
<dbReference type="GO" id="GO:0016208">
    <property type="term" value="F:AMP binding"/>
    <property type="evidence" value="ECO:0007669"/>
    <property type="project" value="EnsemblFungi"/>
</dbReference>
<dbReference type="GO" id="GO:0019002">
    <property type="term" value="F:GMP binding"/>
    <property type="evidence" value="ECO:0007669"/>
    <property type="project" value="EnsemblFungi"/>
</dbReference>
<dbReference type="GO" id="GO:0005525">
    <property type="term" value="F:GTP binding"/>
    <property type="evidence" value="ECO:0007669"/>
    <property type="project" value="UniProtKB-UniRule"/>
</dbReference>
<dbReference type="GO" id="GO:0000287">
    <property type="term" value="F:magnesium ion binding"/>
    <property type="evidence" value="ECO:0007669"/>
    <property type="project" value="UniProtKB-UniRule"/>
</dbReference>
<dbReference type="GO" id="GO:0044208">
    <property type="term" value="P:'de novo' AMP biosynthetic process"/>
    <property type="evidence" value="ECO:0007669"/>
    <property type="project" value="UniProtKB-UniRule"/>
</dbReference>
<dbReference type="GO" id="GO:0071276">
    <property type="term" value="P:cellular response to cadmium ion"/>
    <property type="evidence" value="ECO:0007669"/>
    <property type="project" value="EnsemblFungi"/>
</dbReference>
<dbReference type="GO" id="GO:0046040">
    <property type="term" value="P:IMP metabolic process"/>
    <property type="evidence" value="ECO:0007669"/>
    <property type="project" value="TreeGrafter"/>
</dbReference>
<dbReference type="CDD" id="cd03108">
    <property type="entry name" value="AdSS"/>
    <property type="match status" value="1"/>
</dbReference>
<dbReference type="FunFam" id="1.10.300.10:FF:000001">
    <property type="entry name" value="Adenylosuccinate synthetase"/>
    <property type="match status" value="1"/>
</dbReference>
<dbReference type="FunFam" id="3.90.170.10:FF:000001">
    <property type="entry name" value="Adenylosuccinate synthetase"/>
    <property type="match status" value="1"/>
</dbReference>
<dbReference type="Gene3D" id="3.40.440.10">
    <property type="entry name" value="Adenylosuccinate Synthetase, subunit A, domain 1"/>
    <property type="match status" value="1"/>
</dbReference>
<dbReference type="Gene3D" id="1.10.300.10">
    <property type="entry name" value="Adenylosuccinate Synthetase, subunit A, domain 2"/>
    <property type="match status" value="1"/>
</dbReference>
<dbReference type="Gene3D" id="3.90.170.10">
    <property type="entry name" value="Adenylosuccinate Synthetase, subunit A, domain 3"/>
    <property type="match status" value="1"/>
</dbReference>
<dbReference type="HAMAP" id="MF_00011">
    <property type="entry name" value="Adenylosucc_synth"/>
    <property type="match status" value="1"/>
</dbReference>
<dbReference type="InterPro" id="IPR018220">
    <property type="entry name" value="Adenylosuccin_syn_GTP-bd"/>
</dbReference>
<dbReference type="InterPro" id="IPR033128">
    <property type="entry name" value="Adenylosuccin_syn_Lys_AS"/>
</dbReference>
<dbReference type="InterPro" id="IPR042109">
    <property type="entry name" value="Adenylosuccinate_synth_dom1"/>
</dbReference>
<dbReference type="InterPro" id="IPR042110">
    <property type="entry name" value="Adenylosuccinate_synth_dom2"/>
</dbReference>
<dbReference type="InterPro" id="IPR042111">
    <property type="entry name" value="Adenylosuccinate_synth_dom3"/>
</dbReference>
<dbReference type="InterPro" id="IPR001114">
    <property type="entry name" value="Adenylosuccinate_synthetase"/>
</dbReference>
<dbReference type="InterPro" id="IPR027417">
    <property type="entry name" value="P-loop_NTPase"/>
</dbReference>
<dbReference type="NCBIfam" id="NF002223">
    <property type="entry name" value="PRK01117.1"/>
    <property type="match status" value="1"/>
</dbReference>
<dbReference type="NCBIfam" id="TIGR00184">
    <property type="entry name" value="purA"/>
    <property type="match status" value="1"/>
</dbReference>
<dbReference type="PANTHER" id="PTHR11846">
    <property type="entry name" value="ADENYLOSUCCINATE SYNTHETASE"/>
    <property type="match status" value="1"/>
</dbReference>
<dbReference type="PANTHER" id="PTHR11846:SF0">
    <property type="entry name" value="ADENYLOSUCCINATE SYNTHETASE"/>
    <property type="match status" value="1"/>
</dbReference>
<dbReference type="Pfam" id="PF00709">
    <property type="entry name" value="Adenylsucc_synt"/>
    <property type="match status" value="1"/>
</dbReference>
<dbReference type="SMART" id="SM00788">
    <property type="entry name" value="Adenylsucc_synt"/>
    <property type="match status" value="1"/>
</dbReference>
<dbReference type="SUPFAM" id="SSF52540">
    <property type="entry name" value="P-loop containing nucleoside triphosphate hydrolases"/>
    <property type="match status" value="1"/>
</dbReference>
<dbReference type="PROSITE" id="PS01266">
    <property type="entry name" value="ADENYLOSUCCIN_SYN_1"/>
    <property type="match status" value="1"/>
</dbReference>
<dbReference type="PROSITE" id="PS00513">
    <property type="entry name" value="ADENYLOSUCCIN_SYN_2"/>
    <property type="match status" value="1"/>
</dbReference>
<protein>
    <recommendedName>
        <fullName evidence="2">Adenylosuccinate synthetase</fullName>
        <shortName evidence="2">AMPSase</shortName>
        <shortName evidence="2">AdSS</shortName>
        <ecNumber evidence="2">6.3.4.4</ecNumber>
    </recommendedName>
    <alternativeName>
        <fullName evidence="2">IMP--aspartate ligase</fullName>
    </alternativeName>
</protein>
<proteinExistence type="inferred from homology"/>
<gene>
    <name type="ORF">MGG_17000</name>
</gene>
<organism>
    <name type="scientific">Pyricularia oryzae (strain 70-15 / ATCC MYA-4617 / FGSC 8958)</name>
    <name type="common">Rice blast fungus</name>
    <name type="synonym">Magnaporthe oryzae</name>
    <dbReference type="NCBI Taxonomy" id="242507"/>
    <lineage>
        <taxon>Eukaryota</taxon>
        <taxon>Fungi</taxon>
        <taxon>Dikarya</taxon>
        <taxon>Ascomycota</taxon>
        <taxon>Pezizomycotina</taxon>
        <taxon>Sordariomycetes</taxon>
        <taxon>Sordariomycetidae</taxon>
        <taxon>Magnaporthales</taxon>
        <taxon>Pyriculariaceae</taxon>
        <taxon>Pyricularia</taxon>
    </lineage>
</organism>
<keyword id="KW-0963">Cytoplasm</keyword>
<keyword id="KW-0342">GTP-binding</keyword>
<keyword id="KW-0436">Ligase</keyword>
<keyword id="KW-0460">Magnesium</keyword>
<keyword id="KW-0479">Metal-binding</keyword>
<keyword id="KW-0547">Nucleotide-binding</keyword>
<keyword id="KW-0658">Purine biosynthesis</keyword>
<keyword id="KW-1185">Reference proteome</keyword>
<sequence length="423" mass="47013">MATIILGSQWGDEGKGKLTDILCPSAEICARSAGGHNAGHSIVAQGVSYDFHLLPSGLVNPKCMNLIGSGVVFHVPSFFSELEKLEAKGLAGVRDRIFVSDRCQVNFDLHAAVDGLEEVELGERKIGTTGRGIGPSYSTKASRSGVRISEVFDEAVFERKLRQLADGYRKRFGDLLKYDVEEEIARFKEYRKLLPNYVVDAVKFIKDAQDQNRKILIEGANALMLDIDYGTYPYVTSSNPCLGGIITGLAINPRKIETIVGVVKAYTTRVGDGIFKTEDEGEIGTKLQDIGREWGVSTGRKRRCGWLDLVVVKYSAAINHYTSLNLTKLDVLDTFPTLKVAVAYKDPATGEELDFFPADLSLLERCEVVYKEFEGWNTPTTHIKKFEELPAQARQYVEFIEQYVGVKVGWIGTGPDREDMIYR</sequence>
<comment type="function">
    <text evidence="1">Plays an important role in the de novo pathway and in the salvage pathway of purine nucleotide biosynthesis. Catalyzes the first committed step in the biosynthesis of AMP from IMP (By similarity).</text>
</comment>
<comment type="catalytic activity">
    <reaction evidence="2">
        <text>IMP + L-aspartate + GTP = N(6)-(1,2-dicarboxyethyl)-AMP + GDP + phosphate + 2 H(+)</text>
        <dbReference type="Rhea" id="RHEA:15753"/>
        <dbReference type="ChEBI" id="CHEBI:15378"/>
        <dbReference type="ChEBI" id="CHEBI:29991"/>
        <dbReference type="ChEBI" id="CHEBI:37565"/>
        <dbReference type="ChEBI" id="CHEBI:43474"/>
        <dbReference type="ChEBI" id="CHEBI:57567"/>
        <dbReference type="ChEBI" id="CHEBI:58053"/>
        <dbReference type="ChEBI" id="CHEBI:58189"/>
        <dbReference type="EC" id="6.3.4.4"/>
    </reaction>
</comment>
<comment type="cofactor">
    <cofactor evidence="2">
        <name>Mg(2+)</name>
        <dbReference type="ChEBI" id="CHEBI:18420"/>
    </cofactor>
    <text evidence="2">Binds 1 Mg(2+) ion per subunit.</text>
</comment>
<comment type="pathway">
    <text evidence="2">Purine metabolism; AMP biosynthesis via de novo pathway; AMP from IMP: step 1/2.</text>
</comment>
<comment type="subunit">
    <text evidence="2">Homodimer.</text>
</comment>
<comment type="subcellular location">
    <subcellularLocation>
        <location evidence="2">Cytoplasm</location>
    </subcellularLocation>
</comment>
<comment type="similarity">
    <text evidence="2">Belongs to the adenylosuccinate synthetase family.</text>
</comment>
<reference key="1">
    <citation type="journal article" date="2005" name="Nature">
        <title>The genome sequence of the rice blast fungus Magnaporthe grisea.</title>
        <authorList>
            <person name="Dean R.A."/>
            <person name="Talbot N.J."/>
            <person name="Ebbole D.J."/>
            <person name="Farman M.L."/>
            <person name="Mitchell T.K."/>
            <person name="Orbach M.J."/>
            <person name="Thon M.R."/>
            <person name="Kulkarni R."/>
            <person name="Xu J.-R."/>
            <person name="Pan H."/>
            <person name="Read N.D."/>
            <person name="Lee Y.-H."/>
            <person name="Carbone I."/>
            <person name="Brown D."/>
            <person name="Oh Y.Y."/>
            <person name="Donofrio N."/>
            <person name="Jeong J.S."/>
            <person name="Soanes D.M."/>
            <person name="Djonovic S."/>
            <person name="Kolomiets E."/>
            <person name="Rehmeyer C."/>
            <person name="Li W."/>
            <person name="Harding M."/>
            <person name="Kim S."/>
            <person name="Lebrun M.-H."/>
            <person name="Bohnert H."/>
            <person name="Coughlan S."/>
            <person name="Butler J."/>
            <person name="Calvo S.E."/>
            <person name="Ma L.-J."/>
            <person name="Nicol R."/>
            <person name="Purcell S."/>
            <person name="Nusbaum C."/>
            <person name="Galagan J.E."/>
            <person name="Birren B.W."/>
        </authorList>
    </citation>
    <scope>NUCLEOTIDE SEQUENCE [LARGE SCALE GENOMIC DNA]</scope>
    <source>
        <strain>70-15 / ATCC MYA-4617 / FGSC 8958</strain>
    </source>
</reference>
<accession>A4QXV8</accession>
<accession>G4N9R0</accession>
<evidence type="ECO:0000250" key="1"/>
<evidence type="ECO:0000255" key="2">
    <source>
        <dbReference type="HAMAP-Rule" id="MF_03125"/>
    </source>
</evidence>
<name>PURA_PYRO7</name>
<feature type="chain" id="PRO_0000399342" description="Adenylosuccinate synthetase">
    <location>
        <begin position="1"/>
        <end position="423"/>
    </location>
</feature>
<feature type="active site" description="Proton acceptor" evidence="2">
    <location>
        <position position="12"/>
    </location>
</feature>
<feature type="active site" description="Proton donor" evidence="2">
    <location>
        <position position="40"/>
    </location>
</feature>
<feature type="binding site" evidence="2">
    <location>
        <position position="12"/>
    </location>
    <ligand>
        <name>Mg(2+)</name>
        <dbReference type="ChEBI" id="CHEBI:18420"/>
    </ligand>
</feature>
<feature type="binding site" description="in other chain" evidence="2">
    <location>
        <begin position="37"/>
        <end position="40"/>
    </location>
    <ligand>
        <name>IMP</name>
        <dbReference type="ChEBI" id="CHEBI:58053"/>
        <note>ligand shared between dimeric partners</note>
    </ligand>
</feature>
<feature type="binding site" evidence="2">
    <location>
        <begin position="39"/>
        <end position="41"/>
    </location>
    <ligand>
        <name>GTP</name>
        <dbReference type="ChEBI" id="CHEBI:37565"/>
    </ligand>
</feature>
<feature type="binding site" evidence="2">
    <location>
        <position position="39"/>
    </location>
    <ligand>
        <name>Mg(2+)</name>
        <dbReference type="ChEBI" id="CHEBI:18420"/>
    </ligand>
</feature>
<feature type="binding site" description="in other chain" evidence="2">
    <location>
        <position position="129"/>
    </location>
    <ligand>
        <name>IMP</name>
        <dbReference type="ChEBI" id="CHEBI:58053"/>
        <note>ligand shared between dimeric partners</note>
    </ligand>
</feature>
<feature type="binding site" evidence="2">
    <location>
        <position position="143"/>
    </location>
    <ligand>
        <name>IMP</name>
        <dbReference type="ChEBI" id="CHEBI:58053"/>
        <note>ligand shared between dimeric partners</note>
    </ligand>
</feature>
<feature type="binding site" description="in other chain" evidence="2">
    <location>
        <position position="221"/>
    </location>
    <ligand>
        <name>IMP</name>
        <dbReference type="ChEBI" id="CHEBI:58053"/>
        <note>ligand shared between dimeric partners</note>
    </ligand>
</feature>
<feature type="binding site" description="in other chain" evidence="2">
    <location>
        <position position="236"/>
    </location>
    <ligand>
        <name>IMP</name>
        <dbReference type="ChEBI" id="CHEBI:58053"/>
        <note>ligand shared between dimeric partners</note>
    </ligand>
</feature>
<feature type="binding site" evidence="2">
    <location>
        <begin position="296"/>
        <end position="302"/>
    </location>
    <ligand>
        <name>substrate</name>
    </ligand>
</feature>
<feature type="binding site" description="in other chain" evidence="2">
    <location>
        <position position="300"/>
    </location>
    <ligand>
        <name>IMP</name>
        <dbReference type="ChEBI" id="CHEBI:58053"/>
        <note>ligand shared between dimeric partners</note>
    </ligand>
</feature>
<feature type="binding site" evidence="2">
    <location>
        <position position="302"/>
    </location>
    <ligand>
        <name>GTP</name>
        <dbReference type="ChEBI" id="CHEBI:37565"/>
    </ligand>
</feature>
<feature type="binding site" evidence="2">
    <location>
        <begin position="328"/>
        <end position="330"/>
    </location>
    <ligand>
        <name>GTP</name>
        <dbReference type="ChEBI" id="CHEBI:37565"/>
    </ligand>
</feature>
<feature type="binding site" evidence="2">
    <location>
        <begin position="412"/>
        <end position="414"/>
    </location>
    <ligand>
        <name>GTP</name>
        <dbReference type="ChEBI" id="CHEBI:37565"/>
    </ligand>
</feature>